<accession>P60304</accession>
<accession>P01449</accession>
<accession>P01450</accession>
<accession>Q9PS24</accession>
<accession>Q9W6W8</accession>
<keyword id="KW-0002">3D-structure</keyword>
<keyword id="KW-0123">Cardiotoxin</keyword>
<keyword id="KW-0204">Cytolysis</keyword>
<keyword id="KW-0903">Direct protein sequencing</keyword>
<keyword id="KW-1015">Disulfide bond</keyword>
<keyword id="KW-0354">Hemolysis</keyword>
<keyword id="KW-0472">Membrane</keyword>
<keyword id="KW-0959">Myotoxin</keyword>
<keyword id="KW-0964">Secreted</keyword>
<keyword id="KW-0732">Signal</keyword>
<keyword id="KW-1052">Target cell membrane</keyword>
<keyword id="KW-1053">Target membrane</keyword>
<keyword id="KW-0800">Toxin</keyword>
<comment type="function">
    <text evidence="1 2 5 6">Basic protein that binds to cell membrane and depolarizes cardiomyocytes. It also shows lytic activities on many other cells, including red blood cells. Interaction with sulfatides in the cell membrane induces pore formation and cell internalization and is responsible for cytotoxicity in cardiomyocytes. It targets the mitochondrial membrane and induces mitochondrial swelling and fragmentation (By similarity). It binds to the integrin alpha-V/beta-3 (ITGAV/ITGB3) with a moderate affinity and inhibits protein kinases C (PubMed:8448165). It also binds with high affinity to heparin (PubMed:17685633). It also causes skeletal muscle necrosis after intramuscular injection into mice (PubMed:8342169).</text>
</comment>
<comment type="subunit">
    <text evidence="2">Monomer in solution; Homodimer and oligomer in the presence of negatively charged lipids forming a pore with a size ranging between 20 and 30 Angstroms.</text>
</comment>
<comment type="subcellular location">
    <subcellularLocation>
        <location evidence="3">Secreted</location>
    </subcellularLocation>
    <subcellularLocation>
        <location evidence="2">Target cell membrane</location>
    </subcellularLocation>
</comment>
<comment type="tissue specificity">
    <text evidence="10">Expressed by the venom gland.</text>
</comment>
<comment type="miscellaneous">
    <text evidence="11">Is classified as a S-type cytotoxin, since a serine residue stands at position 49 (Ser-29 in standard classification).</text>
</comment>
<comment type="similarity">
    <text evidence="10">Belongs to the three-finger toxin family. Short-chain subfamily. Type IA cytotoxin sub-subfamily.</text>
</comment>
<sequence length="81" mass="8992">MKTLLLTLVVVTIVCLDLGYTLKCNKLIPIASKTCPAGKNLCYKMFMMSDLTIPVKRGCIDVCPKNSLLVKYVCCNTDRCN</sequence>
<proteinExistence type="evidence at protein level"/>
<dbReference type="EMBL" id="Z54226">
    <property type="protein sequence ID" value="CAA90962.1"/>
    <property type="molecule type" value="mRNA"/>
</dbReference>
<dbReference type="EMBL" id="U42583">
    <property type="protein sequence ID" value="AAB01539.1"/>
    <property type="molecule type" value="mRNA"/>
</dbReference>
<dbReference type="EMBL" id="AJ238736">
    <property type="protein sequence ID" value="CAB42056.1"/>
    <property type="molecule type" value="Genomic_DNA"/>
</dbReference>
<dbReference type="PIR" id="JC4619">
    <property type="entry name" value="H3NJ1F"/>
</dbReference>
<dbReference type="PDB" id="2CDX">
    <property type="method" value="NMR"/>
    <property type="chains" value="A=22-81"/>
</dbReference>
<dbReference type="PDBsum" id="2CDX"/>
<dbReference type="SMR" id="P60304"/>
<dbReference type="EvolutionaryTrace" id="P60304"/>
<dbReference type="GO" id="GO:0005576">
    <property type="term" value="C:extracellular region"/>
    <property type="evidence" value="ECO:0007669"/>
    <property type="project" value="UniProtKB-SubCell"/>
</dbReference>
<dbReference type="GO" id="GO:0016020">
    <property type="term" value="C:membrane"/>
    <property type="evidence" value="ECO:0007669"/>
    <property type="project" value="UniProtKB-KW"/>
</dbReference>
<dbReference type="GO" id="GO:0044218">
    <property type="term" value="C:other organism cell membrane"/>
    <property type="evidence" value="ECO:0007669"/>
    <property type="project" value="UniProtKB-KW"/>
</dbReference>
<dbReference type="GO" id="GO:0090729">
    <property type="term" value="F:toxin activity"/>
    <property type="evidence" value="ECO:0007669"/>
    <property type="project" value="UniProtKB-KW"/>
</dbReference>
<dbReference type="GO" id="GO:0031640">
    <property type="term" value="P:killing of cells of another organism"/>
    <property type="evidence" value="ECO:0007669"/>
    <property type="project" value="UniProtKB-KW"/>
</dbReference>
<dbReference type="CDD" id="cd00206">
    <property type="entry name" value="TFP_snake_toxin"/>
    <property type="match status" value="1"/>
</dbReference>
<dbReference type="FunFam" id="2.10.60.10:FF:000024">
    <property type="entry name" value="Cytotoxin 1"/>
    <property type="match status" value="1"/>
</dbReference>
<dbReference type="Gene3D" id="2.10.60.10">
    <property type="entry name" value="CD59"/>
    <property type="match status" value="1"/>
</dbReference>
<dbReference type="InterPro" id="IPR003572">
    <property type="entry name" value="Cytotoxin_Cobra"/>
</dbReference>
<dbReference type="InterPro" id="IPR003571">
    <property type="entry name" value="Snake_3FTx"/>
</dbReference>
<dbReference type="InterPro" id="IPR045860">
    <property type="entry name" value="Snake_toxin-like_sf"/>
</dbReference>
<dbReference type="InterPro" id="IPR018354">
    <property type="entry name" value="Snake_toxin_con_site"/>
</dbReference>
<dbReference type="InterPro" id="IPR054131">
    <property type="entry name" value="Toxin_cobra-type"/>
</dbReference>
<dbReference type="Pfam" id="PF21947">
    <property type="entry name" value="Toxin_cobra-type"/>
    <property type="match status" value="1"/>
</dbReference>
<dbReference type="PRINTS" id="PR00282">
    <property type="entry name" value="CYTOTOXIN"/>
</dbReference>
<dbReference type="SUPFAM" id="SSF57302">
    <property type="entry name" value="Snake toxin-like"/>
    <property type="match status" value="1"/>
</dbReference>
<dbReference type="PROSITE" id="PS00272">
    <property type="entry name" value="SNAKE_TOXIN"/>
    <property type="match status" value="1"/>
</dbReference>
<feature type="signal peptide" evidence="3 6">
    <location>
        <begin position="1"/>
        <end position="21"/>
    </location>
</feature>
<feature type="chain" id="PRO_0000035365" description="Cytotoxin 1" evidence="3 6">
    <location>
        <begin position="22"/>
        <end position="81"/>
    </location>
</feature>
<feature type="disulfide bond" evidence="4 12">
    <location>
        <begin position="24"/>
        <end position="42"/>
    </location>
</feature>
<feature type="disulfide bond" evidence="4 12">
    <location>
        <begin position="35"/>
        <end position="59"/>
    </location>
</feature>
<feature type="disulfide bond" evidence="4 12">
    <location>
        <begin position="63"/>
        <end position="74"/>
    </location>
</feature>
<feature type="disulfide bond" evidence="4 12">
    <location>
        <begin position="75"/>
        <end position="80"/>
    </location>
</feature>
<feature type="sequence conflict" description="In Ref. 3; CAB42056." evidence="10" ref="3">
    <original>V</original>
    <variation>L</variation>
    <location>
        <position position="10"/>
    </location>
</feature>
<feature type="sequence conflict" description="In Ref. 5; AA sequence." evidence="10" ref="5">
    <original>NS</original>
    <variation>SN</variation>
    <location>
        <begin position="66"/>
        <end position="67"/>
    </location>
</feature>
<feature type="sequence conflict" description="In Ref. 1; CAA90962." evidence="10" ref="1">
    <original>D</original>
    <variation>H</variation>
    <location>
        <position position="78"/>
    </location>
</feature>
<feature type="strand" evidence="13">
    <location>
        <begin position="27"/>
        <end position="30"/>
    </location>
</feature>
<feature type="strand" evidence="13">
    <location>
        <begin position="41"/>
        <end position="46"/>
    </location>
</feature>
<feature type="strand" evidence="13">
    <location>
        <begin position="48"/>
        <end position="50"/>
    </location>
</feature>
<feature type="strand" evidence="13">
    <location>
        <begin position="55"/>
        <end position="62"/>
    </location>
</feature>
<feature type="strand" evidence="13">
    <location>
        <begin position="71"/>
        <end position="77"/>
    </location>
</feature>
<reference key="1">
    <citation type="journal article" date="1996" name="Biochem. Biophys. Res. Commun.">
        <title>cDNA sequence analysis and expression of cardiotoxins from Taiwan Cobra.</title>
        <authorList>
            <person name="Chang L.-S."/>
            <person name="Wu P.-F."/>
            <person name="Lin J."/>
        </authorList>
    </citation>
    <scope>NUCLEOTIDE SEQUENCE [MRNA]</scope>
    <source>
        <tissue>Venom gland</tissue>
    </source>
</reference>
<reference key="2">
    <citation type="submission" date="1995-12" db="EMBL/GenBank/DDBJ databases">
        <authorList>
            <person name="Chu R.C."/>
            <person name="Yang C.-C."/>
        </authorList>
    </citation>
    <scope>NUCLEOTIDE SEQUENCE [MRNA]</scope>
    <source>
        <tissue>Venom gland</tissue>
    </source>
</reference>
<reference key="3">
    <citation type="journal article" date="2000" name="Toxicon">
        <title>The multiplicity of cardiotoxins from Naja naja atra (Taiwan cobra) venom.</title>
        <authorList>
            <person name="Chang L.-S."/>
            <person name="Huang H.-B."/>
            <person name="Lin S.-R."/>
        </authorList>
    </citation>
    <scope>NUCLEOTIDE SEQUENCE [GENOMIC DNA]</scope>
    <source>
        <tissue>Liver</tissue>
    </source>
</reference>
<reference key="4">
    <citation type="journal article" date="1975" name="Biochem. Biophys. Res. Commun.">
        <title>Amino acid sequence of cardiotoxin-analogue I from the venom of Naja naja atra.</title>
        <authorList>
            <person name="Hayashi K."/>
            <person name="Takechi M."/>
            <person name="Sasaki T."/>
            <person name="Lee C.Y."/>
        </authorList>
    </citation>
    <scope>PROTEIN SEQUENCE OF 22-81</scope>
    <scope>SUBCELLULAR LOCATION</scope>
    <source>
        <tissue>Venom</tissue>
    </source>
</reference>
<reference key="5">
    <citation type="journal article" date="1993" name="Biochemistry">
        <title>Cobra venom cardiotoxin (cytotoxin) isoforms and neurotoxin: comparative potency of protein kinase C inhibition and cancer cell cytotoxicity and modes of enzyme inhibition.</title>
        <authorList>
            <person name="Chiou S.-H."/>
            <person name="Raynor R.L."/>
            <person name="Zheng B."/>
            <person name="Chambers T.C."/>
            <person name="Kuo J.F."/>
        </authorList>
    </citation>
    <scope>PROTEIN SEQUENCE OF 22-81</scope>
    <scope>FUNCTION AS AN INHIBITOR OF PKC</scope>
</reference>
<reference key="6">
    <citation type="journal article" date="1993" name="Toxicon">
        <title>Cardiotoxin 1 from cobra (Naja naja atra) venom causes necrosis of skeletal muscle in vivo.</title>
        <authorList>
            <person name="Ownby C.L."/>
            <person name="Fletcher J.E."/>
            <person name="Colberg T.R."/>
        </authorList>
    </citation>
    <scope>FUNCTION AS MYOTOXIN</scope>
    <source>
        <tissue>Venom</tissue>
    </source>
</reference>
<reference key="7">
    <citation type="journal article" date="1994" name="J. Biol. Chem.">
        <title>Two distinct types of cardiotoxin as revealed by the structure and activity relationship of their interaction with zwitterionic phospholipid dispersions.</title>
        <authorList>
            <person name="Chien K.-Y."/>
            <person name="Chiang C.-M."/>
            <person name="Hseu Y.-C."/>
            <person name="Vyas A.A."/>
            <person name="Rule G.S."/>
            <person name="Wu W.-G."/>
        </authorList>
    </citation>
    <scope>FUNCTION</scope>
    <scope>APPARTENANCE TO S-TYPE CYTOTOXIN GROUP</scope>
</reference>
<reference key="8">
    <citation type="journal article" date="2006" name="J. Biol. Chem.">
        <title>Non-cytotoxic cobra cardiotoxin A5 binds to alpha(v)beta3 integrin and inhibits bone resorption. Identification of cardiotoxins as non-RGD integrin-binding proteins of the Ly-6 family.</title>
        <authorList>
            <person name="Wu P.-L."/>
            <person name="Lee S.-C."/>
            <person name="Chuang C.-C."/>
            <person name="Mori S."/>
            <person name="Akakura N."/>
            <person name="Wu W.-G."/>
            <person name="Takada Y."/>
        </authorList>
    </citation>
    <scope>BINDING TO INTEGRIN ALPHA-V/BETA-3</scope>
</reference>
<reference key="9">
    <citation type="journal article" date="2007" name="Biochemistry">
        <title>Structures of heparin-derived tetrasaccharide bound to cobra cardiotoxins: heparin binding at a single protein site with diverse side chain interactions.</title>
        <authorList>
            <person name="Tjong S.C."/>
            <person name="Chen T.S."/>
            <person name="Huang W.N."/>
            <person name="Wu W.G."/>
        </authorList>
    </citation>
    <scope>FUNCTION</scope>
    <scope>BINDING TO HEPARIN</scope>
</reference>
<reference key="10">
    <citation type="journal article" date="1994" name="J. Mol. Biol.">
        <title>Structure of cobra cardiotoxin CTX I as derived from nuclear magnetic resonance spectroscopy and distance geometry calculations.</title>
        <authorList>
            <person name="Jahnke W."/>
            <person name="Mierke D.F."/>
            <person name="Beress L."/>
            <person name="Kessler H."/>
        </authorList>
    </citation>
    <scope>STRUCTURE BY NMR OF 22-81</scope>
    <scope>DISULFIDE BONDS</scope>
</reference>
<name>3SA1_NAJAT</name>
<organism>
    <name type="scientific">Naja atra</name>
    <name type="common">Chinese cobra</name>
    <dbReference type="NCBI Taxonomy" id="8656"/>
    <lineage>
        <taxon>Eukaryota</taxon>
        <taxon>Metazoa</taxon>
        <taxon>Chordata</taxon>
        <taxon>Craniata</taxon>
        <taxon>Vertebrata</taxon>
        <taxon>Euteleostomi</taxon>
        <taxon>Lepidosauria</taxon>
        <taxon>Squamata</taxon>
        <taxon>Bifurcata</taxon>
        <taxon>Unidentata</taxon>
        <taxon>Episquamata</taxon>
        <taxon>Toxicofera</taxon>
        <taxon>Serpentes</taxon>
        <taxon>Colubroidea</taxon>
        <taxon>Elapidae</taxon>
        <taxon>Elapinae</taxon>
        <taxon>Naja</taxon>
    </lineage>
</organism>
<evidence type="ECO:0000250" key="1">
    <source>
        <dbReference type="UniProtKB" id="P01443"/>
    </source>
</evidence>
<evidence type="ECO:0000250" key="2">
    <source>
        <dbReference type="UniProtKB" id="P60301"/>
    </source>
</evidence>
<evidence type="ECO:0000269" key="3">
    <source>
    </source>
</evidence>
<evidence type="ECO:0000269" key="4">
    <source>
    </source>
</evidence>
<evidence type="ECO:0000269" key="5">
    <source>
    </source>
</evidence>
<evidence type="ECO:0000269" key="6">
    <source>
    </source>
</evidence>
<evidence type="ECO:0000303" key="7">
    <source>
    </source>
</evidence>
<evidence type="ECO:0000303" key="8">
    <source>
    </source>
</evidence>
<evidence type="ECO:0000303" key="9">
    <source>
    </source>
</evidence>
<evidence type="ECO:0000305" key="10"/>
<evidence type="ECO:0000305" key="11">
    <source>
    </source>
</evidence>
<evidence type="ECO:0000312" key="12">
    <source>
        <dbReference type="PDB" id="2CDX"/>
    </source>
</evidence>
<evidence type="ECO:0007829" key="13">
    <source>
        <dbReference type="PDB" id="2CDX"/>
    </source>
</evidence>
<protein>
    <recommendedName>
        <fullName>Cytotoxin 1</fullName>
        <shortName>CX1</shortName>
    </recommendedName>
    <alternativeName>
        <fullName>Cardiotoxin 1</fullName>
        <shortName>CTX-1</shortName>
        <shortName>CTX1</shortName>
    </alternativeName>
    <alternativeName>
        <fullName evidence="7 8">Cardiotoxin A1</fullName>
        <shortName evidence="7 8">CTX A1</shortName>
    </alternativeName>
    <alternativeName>
        <fullName evidence="9">Cardiotoxin I</fullName>
    </alternativeName>
    <alternativeName>
        <fullName>Cardiotoxin analog I</fullName>
        <shortName>CTX I</shortName>
    </alternativeName>
</protein>